<sequence length="326" mass="35569">MIKIGNIELSSNIILAPMSGVTDLEFRRLVKRFGAGLVVSEMIASRAMIVESRQSLQKCSIMQDDATSACVQLAGCEPNVIAEAAKMNEDMGAKIIDLNFGCPAKKVVNGYSGSALMRDEGLAAKIFEAAVKAVKIPVTVKMRMGWDDQTKNAPTLAKIAERSGIQMVTVHGRTRCQFYSGNADWEFIKNVKEAVKIPVIANGDITNFAKAKEALEKSSADGVMVGRGAYGKPWLISQIDHYLKTGEEKPAPSIESQLDIVLEHYQAIVDYYGESAGVPIARKHMGWYSSGLPNSAEFRGAVNLMNDPIAVKDKIVEFYTSVINRE</sequence>
<name>DUS_RICBR</name>
<protein>
    <recommendedName>
        <fullName>Probable tRNA-dihydrouridine synthase</fullName>
        <ecNumber>1.3.1.-</ecNumber>
    </recommendedName>
</protein>
<organism>
    <name type="scientific">Rickettsia bellii (strain RML369-C)</name>
    <dbReference type="NCBI Taxonomy" id="336407"/>
    <lineage>
        <taxon>Bacteria</taxon>
        <taxon>Pseudomonadati</taxon>
        <taxon>Pseudomonadota</taxon>
        <taxon>Alphaproteobacteria</taxon>
        <taxon>Rickettsiales</taxon>
        <taxon>Rickettsiaceae</taxon>
        <taxon>Rickettsieae</taxon>
        <taxon>Rickettsia</taxon>
        <taxon>belli group</taxon>
    </lineage>
</organism>
<gene>
    <name type="primary">dus</name>
    <name type="ordered locus">RBE_1199</name>
</gene>
<feature type="chain" id="PRO_0000280959" description="Probable tRNA-dihydrouridine synthase">
    <location>
        <begin position="1"/>
        <end position="326"/>
    </location>
</feature>
<feature type="active site" description="Proton donor" evidence="2">
    <location>
        <position position="102"/>
    </location>
</feature>
<feature type="binding site" evidence="1">
    <location>
        <begin position="17"/>
        <end position="19"/>
    </location>
    <ligand>
        <name>FMN</name>
        <dbReference type="ChEBI" id="CHEBI:58210"/>
    </ligand>
</feature>
<feature type="binding site" evidence="1">
    <location>
        <position position="72"/>
    </location>
    <ligand>
        <name>FMN</name>
        <dbReference type="ChEBI" id="CHEBI:58210"/>
    </ligand>
</feature>
<feature type="binding site" evidence="1">
    <location>
        <position position="141"/>
    </location>
    <ligand>
        <name>FMN</name>
        <dbReference type="ChEBI" id="CHEBI:58210"/>
    </ligand>
</feature>
<feature type="binding site" evidence="1">
    <location>
        <begin position="202"/>
        <end position="204"/>
    </location>
    <ligand>
        <name>FMN</name>
        <dbReference type="ChEBI" id="CHEBI:58210"/>
    </ligand>
</feature>
<feature type="binding site" evidence="1">
    <location>
        <begin position="226"/>
        <end position="227"/>
    </location>
    <ligand>
        <name>FMN</name>
        <dbReference type="ChEBI" id="CHEBI:58210"/>
    </ligand>
</feature>
<proteinExistence type="inferred from homology"/>
<keyword id="KW-0285">Flavoprotein</keyword>
<keyword id="KW-0288">FMN</keyword>
<keyword id="KW-0521">NADP</keyword>
<keyword id="KW-0560">Oxidoreductase</keyword>
<keyword id="KW-0694">RNA-binding</keyword>
<keyword id="KW-0819">tRNA processing</keyword>
<keyword id="KW-0820">tRNA-binding</keyword>
<reference key="1">
    <citation type="journal article" date="2006" name="PLoS Genet.">
        <title>Genome sequence of Rickettsia bellii illuminates the role of amoebae in gene exchanges between intracellular pathogens.</title>
        <authorList>
            <person name="Ogata H."/>
            <person name="La Scola B."/>
            <person name="Audic S."/>
            <person name="Renesto P."/>
            <person name="Blanc G."/>
            <person name="Robert C."/>
            <person name="Fournier P.-E."/>
            <person name="Claverie J.-M."/>
            <person name="Raoult D."/>
        </authorList>
    </citation>
    <scope>NUCLEOTIDE SEQUENCE [LARGE SCALE GENOMIC DNA]</scope>
    <source>
        <strain>RML369-C</strain>
    </source>
</reference>
<evidence type="ECO:0000250" key="1">
    <source>
        <dbReference type="UniProtKB" id="P33371"/>
    </source>
</evidence>
<evidence type="ECO:0000250" key="2">
    <source>
        <dbReference type="UniProtKB" id="Q5SMC7"/>
    </source>
</evidence>
<evidence type="ECO:0000305" key="3"/>
<comment type="function">
    <text evidence="1">Catalyzes the synthesis of 5,6-dihydrouridine (D), a modified base found in the D-loop of most tRNAs, via the reduction of the C5-C6 double bond in target uridines.</text>
</comment>
<comment type="catalytic activity">
    <reaction evidence="1">
        <text>a 5,6-dihydrouridine in tRNA + NAD(+) = a uridine in tRNA + NADH + H(+)</text>
        <dbReference type="Rhea" id="RHEA:54452"/>
        <dbReference type="Rhea" id="RHEA-COMP:13339"/>
        <dbReference type="Rhea" id="RHEA-COMP:13887"/>
        <dbReference type="ChEBI" id="CHEBI:15378"/>
        <dbReference type="ChEBI" id="CHEBI:57540"/>
        <dbReference type="ChEBI" id="CHEBI:57945"/>
        <dbReference type="ChEBI" id="CHEBI:65315"/>
        <dbReference type="ChEBI" id="CHEBI:74443"/>
    </reaction>
</comment>
<comment type="catalytic activity">
    <reaction evidence="1">
        <text>a 5,6-dihydrouridine in tRNA + NADP(+) = a uridine in tRNA + NADPH + H(+)</text>
        <dbReference type="Rhea" id="RHEA:23624"/>
        <dbReference type="Rhea" id="RHEA-COMP:13339"/>
        <dbReference type="Rhea" id="RHEA-COMP:13887"/>
        <dbReference type="ChEBI" id="CHEBI:15378"/>
        <dbReference type="ChEBI" id="CHEBI:57783"/>
        <dbReference type="ChEBI" id="CHEBI:58349"/>
        <dbReference type="ChEBI" id="CHEBI:65315"/>
        <dbReference type="ChEBI" id="CHEBI:74443"/>
    </reaction>
</comment>
<comment type="cofactor">
    <cofactor evidence="1">
        <name>FMN</name>
        <dbReference type="ChEBI" id="CHEBI:58210"/>
    </cofactor>
</comment>
<comment type="similarity">
    <text evidence="3">Belongs to the Dus family.</text>
</comment>
<dbReference type="EC" id="1.3.1.-"/>
<dbReference type="EMBL" id="CP000087">
    <property type="protein sequence ID" value="ABE05280.1"/>
    <property type="molecule type" value="Genomic_DNA"/>
</dbReference>
<dbReference type="RefSeq" id="WP_011477858.1">
    <property type="nucleotide sequence ID" value="NC_007940.1"/>
</dbReference>
<dbReference type="SMR" id="Q1RH84"/>
<dbReference type="KEGG" id="rbe:RBE_1199"/>
<dbReference type="eggNOG" id="COG0042">
    <property type="taxonomic scope" value="Bacteria"/>
</dbReference>
<dbReference type="HOGENOM" id="CLU_013299_0_3_5"/>
<dbReference type="OrthoDB" id="9764501at2"/>
<dbReference type="Proteomes" id="UP000001951">
    <property type="component" value="Chromosome"/>
</dbReference>
<dbReference type="GO" id="GO:0050660">
    <property type="term" value="F:flavin adenine dinucleotide binding"/>
    <property type="evidence" value="ECO:0007669"/>
    <property type="project" value="InterPro"/>
</dbReference>
<dbReference type="GO" id="GO:0000049">
    <property type="term" value="F:tRNA binding"/>
    <property type="evidence" value="ECO:0007669"/>
    <property type="project" value="UniProtKB-KW"/>
</dbReference>
<dbReference type="GO" id="GO:0017150">
    <property type="term" value="F:tRNA dihydrouridine synthase activity"/>
    <property type="evidence" value="ECO:0007669"/>
    <property type="project" value="InterPro"/>
</dbReference>
<dbReference type="CDD" id="cd02801">
    <property type="entry name" value="DUS_like_FMN"/>
    <property type="match status" value="1"/>
</dbReference>
<dbReference type="Gene3D" id="3.20.20.70">
    <property type="entry name" value="Aldolase class I"/>
    <property type="match status" value="1"/>
</dbReference>
<dbReference type="Gene3D" id="1.10.1200.80">
    <property type="entry name" value="Putative flavin oxidoreducatase, domain 2"/>
    <property type="match status" value="1"/>
</dbReference>
<dbReference type="InterPro" id="IPR013785">
    <property type="entry name" value="Aldolase_TIM"/>
</dbReference>
<dbReference type="InterPro" id="IPR035587">
    <property type="entry name" value="DUS-like_FMN-bd"/>
</dbReference>
<dbReference type="InterPro" id="IPR001269">
    <property type="entry name" value="DUS_fam"/>
</dbReference>
<dbReference type="InterPro" id="IPR004652">
    <property type="entry name" value="DusB-like"/>
</dbReference>
<dbReference type="InterPro" id="IPR024036">
    <property type="entry name" value="tRNA-dHydroUridine_Synthase_C"/>
</dbReference>
<dbReference type="InterPro" id="IPR018517">
    <property type="entry name" value="tRNA_hU_synthase_CS"/>
</dbReference>
<dbReference type="NCBIfam" id="TIGR00737">
    <property type="entry name" value="nifR3_yhdG"/>
    <property type="match status" value="1"/>
</dbReference>
<dbReference type="PANTHER" id="PTHR45846">
    <property type="entry name" value="TRNA-DIHYDROURIDINE(47) SYNTHASE [NAD(P)(+)]-LIKE"/>
    <property type="match status" value="1"/>
</dbReference>
<dbReference type="PANTHER" id="PTHR45846:SF1">
    <property type="entry name" value="TRNA-DIHYDROURIDINE(47) SYNTHASE [NAD(P)(+)]-LIKE"/>
    <property type="match status" value="1"/>
</dbReference>
<dbReference type="Pfam" id="PF01207">
    <property type="entry name" value="Dus"/>
    <property type="match status" value="1"/>
</dbReference>
<dbReference type="PIRSF" id="PIRSF006621">
    <property type="entry name" value="Dus"/>
    <property type="match status" value="1"/>
</dbReference>
<dbReference type="SUPFAM" id="SSF51395">
    <property type="entry name" value="FMN-linked oxidoreductases"/>
    <property type="match status" value="1"/>
</dbReference>
<dbReference type="PROSITE" id="PS01136">
    <property type="entry name" value="UPF0034"/>
    <property type="match status" value="1"/>
</dbReference>
<accession>Q1RH84</accession>